<keyword id="KW-0068">Autocatalytic cleavage</keyword>
<keyword id="KW-0227">DNA damage</keyword>
<keyword id="KW-0234">DNA repair</keyword>
<keyword id="KW-0235">DNA replication</keyword>
<keyword id="KW-0238">DNA-binding</keyword>
<keyword id="KW-0378">Hydrolase</keyword>
<keyword id="KW-0678">Repressor</keyword>
<keyword id="KW-0742">SOS response</keyword>
<keyword id="KW-0804">Transcription</keyword>
<keyword id="KW-0805">Transcription regulation</keyword>
<gene>
    <name evidence="1" type="primary">lexA</name>
    <name type="ordered locus">SEN4006</name>
</gene>
<dbReference type="EC" id="3.4.21.88" evidence="1"/>
<dbReference type="EMBL" id="AM933172">
    <property type="protein sequence ID" value="CAR35570.1"/>
    <property type="molecule type" value="Genomic_DNA"/>
</dbReference>
<dbReference type="RefSeq" id="WP_000646079.1">
    <property type="nucleotide sequence ID" value="NC_011294.1"/>
</dbReference>
<dbReference type="SMR" id="B5QZ62"/>
<dbReference type="MEROPS" id="S24.001"/>
<dbReference type="KEGG" id="set:SEN4006"/>
<dbReference type="HOGENOM" id="CLU_066192_45_3_6"/>
<dbReference type="Proteomes" id="UP000000613">
    <property type="component" value="Chromosome"/>
</dbReference>
<dbReference type="GO" id="GO:0003677">
    <property type="term" value="F:DNA binding"/>
    <property type="evidence" value="ECO:0007669"/>
    <property type="project" value="UniProtKB-UniRule"/>
</dbReference>
<dbReference type="GO" id="GO:0004252">
    <property type="term" value="F:serine-type endopeptidase activity"/>
    <property type="evidence" value="ECO:0007669"/>
    <property type="project" value="UniProtKB-UniRule"/>
</dbReference>
<dbReference type="GO" id="GO:0006281">
    <property type="term" value="P:DNA repair"/>
    <property type="evidence" value="ECO:0007669"/>
    <property type="project" value="UniProtKB-UniRule"/>
</dbReference>
<dbReference type="GO" id="GO:0006260">
    <property type="term" value="P:DNA replication"/>
    <property type="evidence" value="ECO:0007669"/>
    <property type="project" value="UniProtKB-UniRule"/>
</dbReference>
<dbReference type="GO" id="GO:0045892">
    <property type="term" value="P:negative regulation of DNA-templated transcription"/>
    <property type="evidence" value="ECO:0007669"/>
    <property type="project" value="UniProtKB-UniRule"/>
</dbReference>
<dbReference type="GO" id="GO:0006508">
    <property type="term" value="P:proteolysis"/>
    <property type="evidence" value="ECO:0007669"/>
    <property type="project" value="InterPro"/>
</dbReference>
<dbReference type="GO" id="GO:0009432">
    <property type="term" value="P:SOS response"/>
    <property type="evidence" value="ECO:0007669"/>
    <property type="project" value="UniProtKB-UniRule"/>
</dbReference>
<dbReference type="CDD" id="cd06529">
    <property type="entry name" value="S24_LexA-like"/>
    <property type="match status" value="1"/>
</dbReference>
<dbReference type="FunFam" id="1.10.10.10:FF:000009">
    <property type="entry name" value="LexA repressor"/>
    <property type="match status" value="1"/>
</dbReference>
<dbReference type="FunFam" id="2.10.109.10:FF:000001">
    <property type="entry name" value="LexA repressor"/>
    <property type="match status" value="1"/>
</dbReference>
<dbReference type="Gene3D" id="2.10.109.10">
    <property type="entry name" value="Umud Fragment, subunit A"/>
    <property type="match status" value="1"/>
</dbReference>
<dbReference type="Gene3D" id="1.10.10.10">
    <property type="entry name" value="Winged helix-like DNA-binding domain superfamily/Winged helix DNA-binding domain"/>
    <property type="match status" value="1"/>
</dbReference>
<dbReference type="HAMAP" id="MF_00015">
    <property type="entry name" value="LexA"/>
    <property type="match status" value="1"/>
</dbReference>
<dbReference type="InterPro" id="IPR006200">
    <property type="entry name" value="LexA"/>
</dbReference>
<dbReference type="InterPro" id="IPR039418">
    <property type="entry name" value="LexA-like"/>
</dbReference>
<dbReference type="InterPro" id="IPR036286">
    <property type="entry name" value="LexA/Signal_pep-like_sf"/>
</dbReference>
<dbReference type="InterPro" id="IPR006199">
    <property type="entry name" value="LexA_DNA-bd_dom"/>
</dbReference>
<dbReference type="InterPro" id="IPR050077">
    <property type="entry name" value="LexA_repressor"/>
</dbReference>
<dbReference type="InterPro" id="IPR006197">
    <property type="entry name" value="Peptidase_S24_LexA"/>
</dbReference>
<dbReference type="InterPro" id="IPR015927">
    <property type="entry name" value="Peptidase_S24_S26A/B/C"/>
</dbReference>
<dbReference type="InterPro" id="IPR036388">
    <property type="entry name" value="WH-like_DNA-bd_sf"/>
</dbReference>
<dbReference type="InterPro" id="IPR036390">
    <property type="entry name" value="WH_DNA-bd_sf"/>
</dbReference>
<dbReference type="NCBIfam" id="TIGR00498">
    <property type="entry name" value="lexA"/>
    <property type="match status" value="1"/>
</dbReference>
<dbReference type="PANTHER" id="PTHR33516">
    <property type="entry name" value="LEXA REPRESSOR"/>
    <property type="match status" value="1"/>
</dbReference>
<dbReference type="PANTHER" id="PTHR33516:SF2">
    <property type="entry name" value="LEXA REPRESSOR-RELATED"/>
    <property type="match status" value="1"/>
</dbReference>
<dbReference type="Pfam" id="PF01726">
    <property type="entry name" value="LexA_DNA_bind"/>
    <property type="match status" value="1"/>
</dbReference>
<dbReference type="Pfam" id="PF00717">
    <property type="entry name" value="Peptidase_S24"/>
    <property type="match status" value="1"/>
</dbReference>
<dbReference type="PRINTS" id="PR00726">
    <property type="entry name" value="LEXASERPTASE"/>
</dbReference>
<dbReference type="SUPFAM" id="SSF51306">
    <property type="entry name" value="LexA/Signal peptidase"/>
    <property type="match status" value="1"/>
</dbReference>
<dbReference type="SUPFAM" id="SSF46785">
    <property type="entry name" value="Winged helix' DNA-binding domain"/>
    <property type="match status" value="1"/>
</dbReference>
<reference key="1">
    <citation type="journal article" date="2008" name="Genome Res.">
        <title>Comparative genome analysis of Salmonella enteritidis PT4 and Salmonella gallinarum 287/91 provides insights into evolutionary and host adaptation pathways.</title>
        <authorList>
            <person name="Thomson N.R."/>
            <person name="Clayton D.J."/>
            <person name="Windhorst D."/>
            <person name="Vernikos G."/>
            <person name="Davidson S."/>
            <person name="Churcher C."/>
            <person name="Quail M.A."/>
            <person name="Stevens M."/>
            <person name="Jones M.A."/>
            <person name="Watson M."/>
            <person name="Barron A."/>
            <person name="Layton A."/>
            <person name="Pickard D."/>
            <person name="Kingsley R.A."/>
            <person name="Bignell A."/>
            <person name="Clark L."/>
            <person name="Harris B."/>
            <person name="Ormond D."/>
            <person name="Abdellah Z."/>
            <person name="Brooks K."/>
            <person name="Cherevach I."/>
            <person name="Chillingworth T."/>
            <person name="Woodward J."/>
            <person name="Norberczak H."/>
            <person name="Lord A."/>
            <person name="Arrowsmith C."/>
            <person name="Jagels K."/>
            <person name="Moule S."/>
            <person name="Mungall K."/>
            <person name="Saunders M."/>
            <person name="Whitehead S."/>
            <person name="Chabalgoity J.A."/>
            <person name="Maskell D."/>
            <person name="Humphreys T."/>
            <person name="Roberts M."/>
            <person name="Barrow P.A."/>
            <person name="Dougan G."/>
            <person name="Parkhill J."/>
        </authorList>
    </citation>
    <scope>NUCLEOTIDE SEQUENCE [LARGE SCALE GENOMIC DNA]</scope>
    <source>
        <strain>P125109</strain>
    </source>
</reference>
<protein>
    <recommendedName>
        <fullName evidence="1">LexA repressor</fullName>
        <ecNumber evidence="1">3.4.21.88</ecNumber>
    </recommendedName>
</protein>
<comment type="function">
    <text evidence="1">Represses a number of genes involved in the response to DNA damage (SOS response), including recA and lexA. Binds to the 16 bp palindromic sequence 5'-CTGTATATATATACAG-3'. In the presence of single-stranded DNA, RecA interacts with LexA causing an autocatalytic cleavage which disrupts the DNA-binding part of LexA, leading to derepression of the SOS regulon and eventually DNA repair.</text>
</comment>
<comment type="catalytic activity">
    <reaction evidence="1">
        <text>Hydrolysis of Ala-|-Gly bond in repressor LexA.</text>
        <dbReference type="EC" id="3.4.21.88"/>
    </reaction>
</comment>
<comment type="subunit">
    <text evidence="1">Homodimer.</text>
</comment>
<comment type="similarity">
    <text evidence="1">Belongs to the peptidase S24 family.</text>
</comment>
<name>LEXA_SALEP</name>
<evidence type="ECO:0000255" key="1">
    <source>
        <dbReference type="HAMAP-Rule" id="MF_00015"/>
    </source>
</evidence>
<sequence length="202" mass="22305">MKALTARQQEVFDLIRDHISQTGMPPTRAEIAQRLGFRSPNAAEEHLKALARKGVLEIVSGASRGIRLLQEEEDGLPLVGRVAAGEPLLAQQHIEGHYQVDPSLFKPSADFLLRVSGMSMKDIGIMDGDLLAVHKTQDVRNGQVVVARIDDEVTVKRLKKQGNKVELLPENSEFTPIVVDLREQSFTIEGLAVGVIRNGEWL</sequence>
<feature type="chain" id="PRO_1000089592" description="LexA repressor">
    <location>
        <begin position="1"/>
        <end position="202"/>
    </location>
</feature>
<feature type="DNA-binding region" description="H-T-H motif" evidence="1">
    <location>
        <begin position="28"/>
        <end position="48"/>
    </location>
</feature>
<feature type="active site" description="For autocatalytic cleavage activity" evidence="1">
    <location>
        <position position="119"/>
    </location>
</feature>
<feature type="active site" description="For autocatalytic cleavage activity" evidence="1">
    <location>
        <position position="156"/>
    </location>
</feature>
<feature type="site" description="Cleavage; by autolysis" evidence="1">
    <location>
        <begin position="84"/>
        <end position="85"/>
    </location>
</feature>
<accession>B5QZ62</accession>
<organism>
    <name type="scientific">Salmonella enteritidis PT4 (strain P125109)</name>
    <dbReference type="NCBI Taxonomy" id="550537"/>
    <lineage>
        <taxon>Bacteria</taxon>
        <taxon>Pseudomonadati</taxon>
        <taxon>Pseudomonadota</taxon>
        <taxon>Gammaproteobacteria</taxon>
        <taxon>Enterobacterales</taxon>
        <taxon>Enterobacteriaceae</taxon>
        <taxon>Salmonella</taxon>
    </lineage>
</organism>
<proteinExistence type="inferred from homology"/>